<feature type="signal peptide" evidence="2">
    <location>
        <begin position="1"/>
        <end position="23"/>
    </location>
</feature>
<feature type="chain" id="PRO_0000042216" description="Arylsulfatase I">
    <location>
        <begin position="24"/>
        <end position="569"/>
    </location>
</feature>
<feature type="region of interest" description="Disordered" evidence="3">
    <location>
        <begin position="510"/>
        <end position="539"/>
    </location>
</feature>
<feature type="active site" description="Nucleophile" evidence="5">
    <location>
        <position position="93"/>
    </location>
</feature>
<feature type="active site" evidence="1">
    <location>
        <position position="149"/>
    </location>
</feature>
<feature type="binding site" evidence="1">
    <location>
        <position position="55"/>
    </location>
    <ligand>
        <name>Ca(2+)</name>
        <dbReference type="ChEBI" id="CHEBI:29108"/>
    </ligand>
</feature>
<feature type="binding site" evidence="1">
    <location>
        <position position="56"/>
    </location>
    <ligand>
        <name>Ca(2+)</name>
        <dbReference type="ChEBI" id="CHEBI:29108"/>
    </ligand>
</feature>
<feature type="binding site" description="via 3-oxoalanine" evidence="1">
    <location>
        <position position="93"/>
    </location>
    <ligand>
        <name>Ca(2+)</name>
        <dbReference type="ChEBI" id="CHEBI:29108"/>
    </ligand>
</feature>
<feature type="binding site" evidence="1">
    <location>
        <position position="147"/>
    </location>
    <ligand>
        <name>substrate</name>
    </ligand>
</feature>
<feature type="binding site" evidence="1">
    <location>
        <position position="239"/>
    </location>
    <ligand>
        <name>substrate</name>
    </ligand>
</feature>
<feature type="binding site" evidence="1">
    <location>
        <position position="297"/>
    </location>
    <ligand>
        <name>Ca(2+)</name>
        <dbReference type="ChEBI" id="CHEBI:29108"/>
    </ligand>
</feature>
<feature type="binding site" evidence="1">
    <location>
        <position position="298"/>
    </location>
    <ligand>
        <name>Ca(2+)</name>
        <dbReference type="ChEBI" id="CHEBI:29108"/>
    </ligand>
</feature>
<feature type="binding site" evidence="1">
    <location>
        <position position="315"/>
    </location>
    <ligand>
        <name>substrate</name>
    </ligand>
</feature>
<feature type="modified residue" description="3-oxoalanine (Cys)" evidence="5">
    <location>
        <position position="93"/>
    </location>
</feature>
<feature type="glycosylation site" description="N-linked (GlcNAc...) asparagine" evidence="2">
    <location>
        <position position="276"/>
    </location>
</feature>
<feature type="glycosylation site" description="N-linked (GlcNAc...) asparagine" evidence="2">
    <location>
        <position position="288"/>
    </location>
</feature>
<feature type="glycosylation site" description="N-linked (GlcNAc...) asparagine" evidence="2">
    <location>
        <position position="466"/>
    </location>
</feature>
<feature type="glycosylation site" description="N-linked (GlcNAc...) asparagine" evidence="2">
    <location>
        <position position="496"/>
    </location>
</feature>
<feature type="splice variant" id="VSP_036022" description="In isoform 2." evidence="6">
    <location>
        <begin position="1"/>
        <end position="143"/>
    </location>
</feature>
<feature type="mutagenesis site" description="No arylsulfatase activity in the media of retinal epithelium cell." evidence="5">
    <original>C</original>
    <variation>S</variation>
    <location>
        <position position="93"/>
    </location>
</feature>
<feature type="sequence conflict" description="In Ref. 4; BAG53634." evidence="7" ref="4">
    <original>L</original>
    <variation>F</variation>
    <location>
        <position position="171"/>
    </location>
</feature>
<feature type="sequence conflict" description="In Ref. 4; BAG53634." evidence="7" ref="4">
    <original>L</original>
    <variation>P</variation>
    <location>
        <position position="211"/>
    </location>
</feature>
<gene>
    <name type="primary">ARSI</name>
</gene>
<sequence length="569" mass="64030">MHTLTGFSLVSLLSFGYLSWDWAKPSFVADGPGEAGEQPSAAPPQPPHIIFILTDDQGYHDVGYHGSDIETPTLDRLAAKGVKLENYYIQPICTPSRSQLLTGRYQIHTGLQHSIIRPQQPNCLPLDQVTLPQKLQEAGYSTHMVGKWHLGFYRKECLPTRRGFDTFLGSLTGNVDYYTYDNCDGPGVCGFDLHEGENVAWGLSGQYSTMLYAQRASHILASHSPQRPLFLYVAFQAVHTPLQSPREYLYRYRTMGNVARRKYAAMVTCMDEAVRNITWALKRYGFYNNSVIIFSSDNGGQTFSGGSNWPLRGRKGTYWEGGVRGLGFVHSPLLKRKQRTSRALMHITDWYPTLVGLAGGTTSAADGLDGYDVWPAISEGRASPRTEILHNIDPLYNHAQHGSLEGGFGIWNTAVQAAIRVGEWKLLTGDPGYGDWIPPQTLATFPGSWWNLERMASVRQAVWLFNISADPYEREDLAGQRPDVVRTLLARLAEYNRTAIPVRYPAENPRAHPDFNGGAWGPWASDEEEEEEEGRARSFSRGRRKKKCKICKLRSFFRKLNTRLMSQRI</sequence>
<reference key="1">
    <citation type="journal article" date="2005" name="Hum. Mol. Genet.">
        <title>Sulfatases and sulfatase modifying factors: an exclusive and promiscuous relationship.</title>
        <authorList>
            <person name="Sardiello M."/>
            <person name="Annunziata I."/>
            <person name="Roma G."/>
            <person name="Ballabio A."/>
        </authorList>
    </citation>
    <scope>NUCLEOTIDE SEQUENCE [MRNA] (ISOFORM 1)</scope>
</reference>
<reference key="2">
    <citation type="journal article" date="2006" name="Gene">
        <title>Molecular cloning and initial characterization of three novel human sulfatases.</title>
        <authorList>
            <person name="Obaya A.J."/>
        </authorList>
    </citation>
    <scope>NUCLEOTIDE SEQUENCE [MRNA] (ISOFORM 1)</scope>
    <scope>TISSUE SPECIFICITY</scope>
    <scope>ABSENCE OF ARYLSULFATASE ACTIVITY</scope>
</reference>
<reference key="3">
    <citation type="journal article" date="2009" name="Mol. Vis.">
        <title>Characterization of the arylsulfatase I (ARSI) gene preferentially expressed in the human retinal pigment epithelium cell line ARPE-19.</title>
        <authorList>
            <person name="Oshikawa M."/>
            <person name="Usami R."/>
            <person name="Kato S."/>
        </authorList>
    </citation>
    <scope>NUCLEOTIDE SEQUENCE [MRNA] (ISOFORM 1)</scope>
    <scope>FUNCTION</scope>
    <scope>SUBCELLULAR LOCATION</scope>
    <scope>MUTAGENESIS OF CYS-93</scope>
    <scope>OXOALANINE AT CYS-93</scope>
    <scope>TISSUE SPECIFICITY</scope>
</reference>
<reference key="4">
    <citation type="journal article" date="2004" name="Nat. Genet.">
        <title>Complete sequencing and characterization of 21,243 full-length human cDNAs.</title>
        <authorList>
            <person name="Ota T."/>
            <person name="Suzuki Y."/>
            <person name="Nishikawa T."/>
            <person name="Otsuki T."/>
            <person name="Sugiyama T."/>
            <person name="Irie R."/>
            <person name="Wakamatsu A."/>
            <person name="Hayashi K."/>
            <person name="Sato H."/>
            <person name="Nagai K."/>
            <person name="Kimura K."/>
            <person name="Makita H."/>
            <person name="Sekine M."/>
            <person name="Obayashi M."/>
            <person name="Nishi T."/>
            <person name="Shibahara T."/>
            <person name="Tanaka T."/>
            <person name="Ishii S."/>
            <person name="Yamamoto J."/>
            <person name="Saito K."/>
            <person name="Kawai Y."/>
            <person name="Isono Y."/>
            <person name="Nakamura Y."/>
            <person name="Nagahari K."/>
            <person name="Murakami K."/>
            <person name="Yasuda T."/>
            <person name="Iwayanagi T."/>
            <person name="Wagatsuma M."/>
            <person name="Shiratori A."/>
            <person name="Sudo H."/>
            <person name="Hosoiri T."/>
            <person name="Kaku Y."/>
            <person name="Kodaira H."/>
            <person name="Kondo H."/>
            <person name="Sugawara M."/>
            <person name="Takahashi M."/>
            <person name="Kanda K."/>
            <person name="Yokoi T."/>
            <person name="Furuya T."/>
            <person name="Kikkawa E."/>
            <person name="Omura Y."/>
            <person name="Abe K."/>
            <person name="Kamihara K."/>
            <person name="Katsuta N."/>
            <person name="Sato K."/>
            <person name="Tanikawa M."/>
            <person name="Yamazaki M."/>
            <person name="Ninomiya K."/>
            <person name="Ishibashi T."/>
            <person name="Yamashita H."/>
            <person name="Murakawa K."/>
            <person name="Fujimori K."/>
            <person name="Tanai H."/>
            <person name="Kimata M."/>
            <person name="Watanabe M."/>
            <person name="Hiraoka S."/>
            <person name="Chiba Y."/>
            <person name="Ishida S."/>
            <person name="Ono Y."/>
            <person name="Takiguchi S."/>
            <person name="Watanabe S."/>
            <person name="Yosida M."/>
            <person name="Hotuta T."/>
            <person name="Kusano J."/>
            <person name="Kanehori K."/>
            <person name="Takahashi-Fujii A."/>
            <person name="Hara H."/>
            <person name="Tanase T.-O."/>
            <person name="Nomura Y."/>
            <person name="Togiya S."/>
            <person name="Komai F."/>
            <person name="Hara R."/>
            <person name="Takeuchi K."/>
            <person name="Arita M."/>
            <person name="Imose N."/>
            <person name="Musashino K."/>
            <person name="Yuuki H."/>
            <person name="Oshima A."/>
            <person name="Sasaki N."/>
            <person name="Aotsuka S."/>
            <person name="Yoshikawa Y."/>
            <person name="Matsunawa H."/>
            <person name="Ichihara T."/>
            <person name="Shiohata N."/>
            <person name="Sano S."/>
            <person name="Moriya S."/>
            <person name="Momiyama H."/>
            <person name="Satoh N."/>
            <person name="Takami S."/>
            <person name="Terashima Y."/>
            <person name="Suzuki O."/>
            <person name="Nakagawa S."/>
            <person name="Senoh A."/>
            <person name="Mizoguchi H."/>
            <person name="Goto Y."/>
            <person name="Shimizu F."/>
            <person name="Wakebe H."/>
            <person name="Hishigaki H."/>
            <person name="Watanabe T."/>
            <person name="Sugiyama A."/>
            <person name="Takemoto M."/>
            <person name="Kawakami B."/>
            <person name="Yamazaki M."/>
            <person name="Watanabe K."/>
            <person name="Kumagai A."/>
            <person name="Itakura S."/>
            <person name="Fukuzumi Y."/>
            <person name="Fujimori Y."/>
            <person name="Komiyama M."/>
            <person name="Tashiro H."/>
            <person name="Tanigami A."/>
            <person name="Fujiwara T."/>
            <person name="Ono T."/>
            <person name="Yamada K."/>
            <person name="Fujii Y."/>
            <person name="Ozaki K."/>
            <person name="Hirao M."/>
            <person name="Ohmori Y."/>
            <person name="Kawabata A."/>
            <person name="Hikiji T."/>
            <person name="Kobatake N."/>
            <person name="Inagaki H."/>
            <person name="Ikema Y."/>
            <person name="Okamoto S."/>
            <person name="Okitani R."/>
            <person name="Kawakami T."/>
            <person name="Noguchi S."/>
            <person name="Itoh T."/>
            <person name="Shigeta K."/>
            <person name="Senba T."/>
            <person name="Matsumura K."/>
            <person name="Nakajima Y."/>
            <person name="Mizuno T."/>
            <person name="Morinaga M."/>
            <person name="Sasaki M."/>
            <person name="Togashi T."/>
            <person name="Oyama M."/>
            <person name="Hata H."/>
            <person name="Watanabe M."/>
            <person name="Komatsu T."/>
            <person name="Mizushima-Sugano J."/>
            <person name="Satoh T."/>
            <person name="Shirai Y."/>
            <person name="Takahashi Y."/>
            <person name="Nakagawa K."/>
            <person name="Okumura K."/>
            <person name="Nagase T."/>
            <person name="Nomura N."/>
            <person name="Kikuchi H."/>
            <person name="Masuho Y."/>
            <person name="Yamashita R."/>
            <person name="Nakai K."/>
            <person name="Yada T."/>
            <person name="Nakamura Y."/>
            <person name="Ohara O."/>
            <person name="Isogai T."/>
            <person name="Sugano S."/>
        </authorList>
    </citation>
    <scope>NUCLEOTIDE SEQUENCE [LARGE SCALE MRNA] (ISOFORM 2)</scope>
    <source>
        <tissue>Lung</tissue>
    </source>
</reference>
<reference key="5">
    <citation type="journal article" date="2004" name="Genome Res.">
        <title>The status, quality, and expansion of the NIH full-length cDNA project: the Mammalian Gene Collection (MGC).</title>
        <authorList>
            <consortium name="The MGC Project Team"/>
        </authorList>
    </citation>
    <scope>NUCLEOTIDE SEQUENCE [LARGE SCALE MRNA] (ISOFORM 1)</scope>
</reference>
<comment type="function">
    <text evidence="4 5">Displays arylsulfatase activity at neutral pH, when co-expressed with SUMF1; arylsulfatase activity is measured in the secretion medium of retinal cell line, but no activity is recorded when measured in cell extracts (PubMed:19262745). Lacks arylsulfatase activity (PubMed:16500042).</text>
</comment>
<comment type="cofactor">
    <cofactor evidence="1">
        <name>Ca(2+)</name>
        <dbReference type="ChEBI" id="CHEBI:29108"/>
    </cofactor>
    <text evidence="1">Binds 1 Ca(2+) ion per subunit.</text>
</comment>
<comment type="interaction">
    <interactant intactId="EBI-10243706">
        <id>Q5FYB1</id>
    </interactant>
    <interactant intactId="EBI-10171697">
        <id>Q6A162</id>
        <label>KRT40</label>
    </interactant>
    <organismsDiffer>false</organismsDiffer>
    <experiments>3</experiments>
</comment>
<comment type="subcellular location">
    <subcellularLocation>
        <location evidence="5">Secreted</location>
    </subcellularLocation>
    <subcellularLocation>
        <location evidence="5">Endoplasmic reticulum</location>
    </subcellularLocation>
    <text>Localized in the intracellular granular structures.</text>
</comment>
<comment type="alternative products">
    <event type="alternative splicing"/>
    <isoform>
        <id>Q5FYB1-1</id>
        <name>1</name>
        <sequence type="displayed"/>
    </isoform>
    <isoform>
        <id>Q5FYB1-2</id>
        <name>2</name>
        <sequence type="described" ref="VSP_036022"/>
    </isoform>
</comment>
<comment type="tissue specificity">
    <text evidence="4 5">Expressed in placenta, in embryonic stem cells, fetal eyes and lens.</text>
</comment>
<comment type="PTM">
    <text evidence="5">The oxidation of Cys-93 residue to 3-oxoalanine (also known as C(alpha)-formylglycine) by SUMF1/Sulfatase-modifying factor 1, seems critical for catalytic activity.</text>
</comment>
<comment type="similarity">
    <text evidence="7">Belongs to the sulfatase family.</text>
</comment>
<dbReference type="EC" id="3.1.6.-"/>
<dbReference type="EMBL" id="AY875937">
    <property type="protein sequence ID" value="AAW66665.1"/>
    <property type="molecule type" value="mRNA"/>
</dbReference>
<dbReference type="EMBL" id="AB448735">
    <property type="protein sequence ID" value="BAH11166.1"/>
    <property type="molecule type" value="mRNA"/>
</dbReference>
<dbReference type="EMBL" id="AK122641">
    <property type="protein sequence ID" value="BAG53634.1"/>
    <property type="molecule type" value="mRNA"/>
</dbReference>
<dbReference type="EMBL" id="BC129995">
    <property type="protein sequence ID" value="AAI29996.1"/>
    <property type="molecule type" value="mRNA"/>
</dbReference>
<dbReference type="EMBL" id="BC129996">
    <property type="protein sequence ID" value="AAI29997.1"/>
    <property type="molecule type" value="mRNA"/>
</dbReference>
<dbReference type="CCDS" id="CCDS34275.1">
    <molecule id="Q5FYB1-1"/>
</dbReference>
<dbReference type="RefSeq" id="NP_001012301.1">
    <molecule id="Q5FYB1-1"/>
    <property type="nucleotide sequence ID" value="NM_001012301.4"/>
</dbReference>
<dbReference type="SMR" id="Q5FYB1"/>
<dbReference type="BioGRID" id="130992">
    <property type="interactions" value="12"/>
</dbReference>
<dbReference type="FunCoup" id="Q5FYB1">
    <property type="interactions" value="66"/>
</dbReference>
<dbReference type="IntAct" id="Q5FYB1">
    <property type="interactions" value="5"/>
</dbReference>
<dbReference type="STRING" id="9606.ENSP00000333395"/>
<dbReference type="GlyCosmos" id="Q5FYB1">
    <property type="glycosylation" value="4 sites, No reported glycans"/>
</dbReference>
<dbReference type="GlyGen" id="Q5FYB1">
    <property type="glycosylation" value="4 sites"/>
</dbReference>
<dbReference type="iPTMnet" id="Q5FYB1"/>
<dbReference type="PhosphoSitePlus" id="Q5FYB1"/>
<dbReference type="BioMuta" id="ARSI"/>
<dbReference type="DMDM" id="74722581"/>
<dbReference type="MassIVE" id="Q5FYB1"/>
<dbReference type="PaxDb" id="9606-ENSP00000333395"/>
<dbReference type="PeptideAtlas" id="Q5FYB1"/>
<dbReference type="Antibodypedia" id="50254">
    <property type="antibodies" value="177 antibodies from 26 providers"/>
</dbReference>
<dbReference type="DNASU" id="340075"/>
<dbReference type="Ensembl" id="ENST00000328668.8">
    <molecule id="Q5FYB1-1"/>
    <property type="protein sequence ID" value="ENSP00000333395.7"/>
    <property type="gene ID" value="ENSG00000183876.9"/>
</dbReference>
<dbReference type="Ensembl" id="ENST00000515301.2">
    <molecule id="Q5FYB1-2"/>
    <property type="protein sequence ID" value="ENSP00000426879.2"/>
    <property type="gene ID" value="ENSG00000183876.9"/>
</dbReference>
<dbReference type="GeneID" id="340075"/>
<dbReference type="KEGG" id="hsa:340075"/>
<dbReference type="MANE-Select" id="ENST00000328668.8">
    <property type="protein sequence ID" value="ENSP00000333395.7"/>
    <property type="RefSeq nucleotide sequence ID" value="NM_001012301.4"/>
    <property type="RefSeq protein sequence ID" value="NP_001012301.1"/>
</dbReference>
<dbReference type="UCSC" id="uc003lrv.3">
    <molecule id="Q5FYB1-1"/>
    <property type="organism name" value="human"/>
</dbReference>
<dbReference type="AGR" id="HGNC:32521"/>
<dbReference type="CTD" id="340075"/>
<dbReference type="DisGeNET" id="340075"/>
<dbReference type="GeneCards" id="ARSI"/>
<dbReference type="HGNC" id="HGNC:32521">
    <property type="gene designation" value="ARSI"/>
</dbReference>
<dbReference type="HPA" id="ENSG00000183876">
    <property type="expression patterns" value="Low tissue specificity"/>
</dbReference>
<dbReference type="MalaCards" id="ARSI"/>
<dbReference type="MIM" id="610009">
    <property type="type" value="gene"/>
</dbReference>
<dbReference type="neXtProt" id="NX_Q5FYB1"/>
<dbReference type="OpenTargets" id="ENSG00000183876"/>
<dbReference type="Orphanet" id="401815">
    <property type="disease" value="Autosomal recessive spastic paraplegia type 66"/>
</dbReference>
<dbReference type="PharmGKB" id="PA143485309"/>
<dbReference type="VEuPathDB" id="HostDB:ENSG00000183876"/>
<dbReference type="eggNOG" id="KOG3867">
    <property type="taxonomic scope" value="Eukaryota"/>
</dbReference>
<dbReference type="GeneTree" id="ENSGT00940000157656"/>
<dbReference type="HOGENOM" id="CLU_006332_10_1_1"/>
<dbReference type="InParanoid" id="Q5FYB1"/>
<dbReference type="OMA" id="WDWMKPS"/>
<dbReference type="OrthoDB" id="103349at2759"/>
<dbReference type="PAN-GO" id="Q5FYB1">
    <property type="GO annotations" value="0 GO annotations based on evolutionary models"/>
</dbReference>
<dbReference type="PhylomeDB" id="Q5FYB1"/>
<dbReference type="TreeFam" id="TF314186"/>
<dbReference type="PathwayCommons" id="Q5FYB1"/>
<dbReference type="Reactome" id="R-HSA-1663150">
    <property type="pathway name" value="The activation of arylsulfatases"/>
</dbReference>
<dbReference type="Reactome" id="R-HSA-9840310">
    <property type="pathway name" value="Glycosphingolipid catabolism"/>
</dbReference>
<dbReference type="SignaLink" id="Q5FYB1"/>
<dbReference type="BioGRID-ORCS" id="340075">
    <property type="hits" value="13 hits in 1139 CRISPR screens"/>
</dbReference>
<dbReference type="GenomeRNAi" id="340075"/>
<dbReference type="Pharos" id="Q5FYB1">
    <property type="development level" value="Tbio"/>
</dbReference>
<dbReference type="PRO" id="PR:Q5FYB1"/>
<dbReference type="Proteomes" id="UP000005640">
    <property type="component" value="Chromosome 5"/>
</dbReference>
<dbReference type="RNAct" id="Q5FYB1">
    <property type="molecule type" value="protein"/>
</dbReference>
<dbReference type="Bgee" id="ENSG00000183876">
    <property type="expression patterns" value="Expressed in stromal cell of endometrium and 102 other cell types or tissues"/>
</dbReference>
<dbReference type="ExpressionAtlas" id="Q5FYB1">
    <property type="expression patterns" value="baseline and differential"/>
</dbReference>
<dbReference type="GO" id="GO:0005788">
    <property type="term" value="C:endoplasmic reticulum lumen"/>
    <property type="evidence" value="ECO:0000304"/>
    <property type="project" value="Reactome"/>
</dbReference>
<dbReference type="GO" id="GO:0005576">
    <property type="term" value="C:extracellular region"/>
    <property type="evidence" value="ECO:0007669"/>
    <property type="project" value="UniProtKB-SubCell"/>
</dbReference>
<dbReference type="GO" id="GO:0004065">
    <property type="term" value="F:arylsulfatase activity"/>
    <property type="evidence" value="ECO:0000304"/>
    <property type="project" value="HGNC-UCL"/>
</dbReference>
<dbReference type="GO" id="GO:0046872">
    <property type="term" value="F:metal ion binding"/>
    <property type="evidence" value="ECO:0007669"/>
    <property type="project" value="UniProtKB-KW"/>
</dbReference>
<dbReference type="CDD" id="cd16029">
    <property type="entry name" value="4-S"/>
    <property type="match status" value="1"/>
</dbReference>
<dbReference type="FunFam" id="3.30.1120.10:FF:000002">
    <property type="entry name" value="Arylsulfatase family member J"/>
    <property type="match status" value="1"/>
</dbReference>
<dbReference type="FunFam" id="3.40.720.10:FF:000007">
    <property type="entry name" value="Arylsulfatase family, member J"/>
    <property type="match status" value="1"/>
</dbReference>
<dbReference type="Gene3D" id="3.30.1120.10">
    <property type="match status" value="1"/>
</dbReference>
<dbReference type="Gene3D" id="3.40.720.10">
    <property type="entry name" value="Alkaline Phosphatase, subunit A"/>
    <property type="match status" value="1"/>
</dbReference>
<dbReference type="InterPro" id="IPR017850">
    <property type="entry name" value="Alkaline_phosphatase_core_sf"/>
</dbReference>
<dbReference type="InterPro" id="IPR047115">
    <property type="entry name" value="ARSB"/>
</dbReference>
<dbReference type="InterPro" id="IPR024607">
    <property type="entry name" value="Sulfatase_CS"/>
</dbReference>
<dbReference type="InterPro" id="IPR000917">
    <property type="entry name" value="Sulfatase_N"/>
</dbReference>
<dbReference type="PANTHER" id="PTHR10342">
    <property type="entry name" value="ARYLSULFATASE"/>
    <property type="match status" value="1"/>
</dbReference>
<dbReference type="PANTHER" id="PTHR10342:SF68">
    <property type="entry name" value="ARYLSULFATASE I"/>
    <property type="match status" value="1"/>
</dbReference>
<dbReference type="Pfam" id="PF00884">
    <property type="entry name" value="Sulfatase"/>
    <property type="match status" value="1"/>
</dbReference>
<dbReference type="SUPFAM" id="SSF53649">
    <property type="entry name" value="Alkaline phosphatase-like"/>
    <property type="match status" value="1"/>
</dbReference>
<dbReference type="PROSITE" id="PS00523">
    <property type="entry name" value="SULFATASE_1"/>
    <property type="match status" value="1"/>
</dbReference>
<dbReference type="PROSITE" id="PS00149">
    <property type="entry name" value="SULFATASE_2"/>
    <property type="match status" value="1"/>
</dbReference>
<protein>
    <recommendedName>
        <fullName>Arylsulfatase I</fullName>
        <shortName>ASI</shortName>
        <ecNumber>3.1.6.-</ecNumber>
    </recommendedName>
</protein>
<name>ARSI_HUMAN</name>
<proteinExistence type="evidence at protein level"/>
<evidence type="ECO:0000250" key="1">
    <source>
        <dbReference type="UniProtKB" id="P15289"/>
    </source>
</evidence>
<evidence type="ECO:0000255" key="2"/>
<evidence type="ECO:0000256" key="3">
    <source>
        <dbReference type="SAM" id="MobiDB-lite"/>
    </source>
</evidence>
<evidence type="ECO:0000269" key="4">
    <source>
    </source>
</evidence>
<evidence type="ECO:0000269" key="5">
    <source>
    </source>
</evidence>
<evidence type="ECO:0000303" key="6">
    <source>
    </source>
</evidence>
<evidence type="ECO:0000305" key="7"/>
<keyword id="KW-0025">Alternative splicing</keyword>
<keyword id="KW-0106">Calcium</keyword>
<keyword id="KW-0256">Endoplasmic reticulum</keyword>
<keyword id="KW-0325">Glycoprotein</keyword>
<keyword id="KW-0378">Hydrolase</keyword>
<keyword id="KW-0479">Metal-binding</keyword>
<keyword id="KW-0558">Oxidation</keyword>
<keyword id="KW-1267">Proteomics identification</keyword>
<keyword id="KW-1185">Reference proteome</keyword>
<keyword id="KW-0964">Secreted</keyword>
<keyword id="KW-0732">Signal</keyword>
<organism>
    <name type="scientific">Homo sapiens</name>
    <name type="common">Human</name>
    <dbReference type="NCBI Taxonomy" id="9606"/>
    <lineage>
        <taxon>Eukaryota</taxon>
        <taxon>Metazoa</taxon>
        <taxon>Chordata</taxon>
        <taxon>Craniata</taxon>
        <taxon>Vertebrata</taxon>
        <taxon>Euteleostomi</taxon>
        <taxon>Mammalia</taxon>
        <taxon>Eutheria</taxon>
        <taxon>Euarchontoglires</taxon>
        <taxon>Primates</taxon>
        <taxon>Haplorrhini</taxon>
        <taxon>Catarrhini</taxon>
        <taxon>Hominidae</taxon>
        <taxon>Homo</taxon>
    </lineage>
</organism>
<accession>Q5FYB1</accession>
<accession>A1L3B0</accession>
<accession>B3KV22</accession>
<accession>B7XD03</accession>